<gene>
    <name evidence="2" type="primary">rpsL</name>
    <name type="ordered locus">Ajs_0273</name>
</gene>
<keyword id="KW-0488">Methylation</keyword>
<keyword id="KW-0687">Ribonucleoprotein</keyword>
<keyword id="KW-0689">Ribosomal protein</keyword>
<keyword id="KW-0694">RNA-binding</keyword>
<keyword id="KW-0699">rRNA-binding</keyword>
<keyword id="KW-0820">tRNA-binding</keyword>
<name>RS12_ACISJ</name>
<accession>A1W2Q2</accession>
<feature type="chain" id="PRO_0000295944" description="Small ribosomal subunit protein uS12">
    <location>
        <begin position="1"/>
        <end position="125"/>
    </location>
</feature>
<feature type="modified residue" description="3-methylthioaspartic acid" evidence="1">
    <location>
        <position position="89"/>
    </location>
</feature>
<protein>
    <recommendedName>
        <fullName evidence="2">Small ribosomal subunit protein uS12</fullName>
    </recommendedName>
    <alternativeName>
        <fullName evidence="3">30S ribosomal protein S12</fullName>
    </alternativeName>
</protein>
<proteinExistence type="inferred from homology"/>
<organism>
    <name type="scientific">Acidovorax sp. (strain JS42)</name>
    <dbReference type="NCBI Taxonomy" id="232721"/>
    <lineage>
        <taxon>Bacteria</taxon>
        <taxon>Pseudomonadati</taxon>
        <taxon>Pseudomonadota</taxon>
        <taxon>Betaproteobacteria</taxon>
        <taxon>Burkholderiales</taxon>
        <taxon>Comamonadaceae</taxon>
        <taxon>Acidovorax</taxon>
    </lineage>
</organism>
<comment type="function">
    <text evidence="2">With S4 and S5 plays an important role in translational accuracy.</text>
</comment>
<comment type="function">
    <text evidence="2">Interacts with and stabilizes bases of the 16S rRNA that are involved in tRNA selection in the A site and with the mRNA backbone. Located at the interface of the 30S and 50S subunits, it traverses the body of the 30S subunit contacting proteins on the other side and probably holding the rRNA structure together. The combined cluster of proteins S8, S12 and S17 appears to hold together the shoulder and platform of the 30S subunit.</text>
</comment>
<comment type="subunit">
    <text evidence="2">Part of the 30S ribosomal subunit. Contacts proteins S8 and S17. May interact with IF1 in the 30S initiation complex.</text>
</comment>
<comment type="similarity">
    <text evidence="2">Belongs to the universal ribosomal protein uS12 family.</text>
</comment>
<evidence type="ECO:0000250" key="1"/>
<evidence type="ECO:0000255" key="2">
    <source>
        <dbReference type="HAMAP-Rule" id="MF_00403"/>
    </source>
</evidence>
<evidence type="ECO:0000305" key="3"/>
<reference key="1">
    <citation type="submission" date="2006-12" db="EMBL/GenBank/DDBJ databases">
        <title>Complete sequence of chromosome 1 of Acidovorax sp. JS42.</title>
        <authorList>
            <person name="Copeland A."/>
            <person name="Lucas S."/>
            <person name="Lapidus A."/>
            <person name="Barry K."/>
            <person name="Detter J.C."/>
            <person name="Glavina del Rio T."/>
            <person name="Dalin E."/>
            <person name="Tice H."/>
            <person name="Pitluck S."/>
            <person name="Chertkov O."/>
            <person name="Brettin T."/>
            <person name="Bruce D."/>
            <person name="Han C."/>
            <person name="Tapia R."/>
            <person name="Gilna P."/>
            <person name="Schmutz J."/>
            <person name="Larimer F."/>
            <person name="Land M."/>
            <person name="Hauser L."/>
            <person name="Kyrpides N."/>
            <person name="Kim E."/>
            <person name="Stahl D."/>
            <person name="Richardson P."/>
        </authorList>
    </citation>
    <scope>NUCLEOTIDE SEQUENCE [LARGE SCALE GENOMIC DNA]</scope>
    <source>
        <strain>JS42</strain>
    </source>
</reference>
<sequence length="125" mass="13905">MPTINQLVRQGRTVEVVKSKSPAMENCPQRRGVCTRVYTTTPKKPNSALRKVAKVRLTNGFEVISYIGGEGHNLQEHSVVLVRGGRVKDLPGVRYHIVRGSLDLQGVKDRKQARSKYGAKKPKAK</sequence>
<dbReference type="EMBL" id="CP000539">
    <property type="protein sequence ID" value="ABM40527.1"/>
    <property type="molecule type" value="Genomic_DNA"/>
</dbReference>
<dbReference type="SMR" id="A1W2Q2"/>
<dbReference type="STRING" id="232721.Ajs_0273"/>
<dbReference type="KEGG" id="ajs:Ajs_0273"/>
<dbReference type="eggNOG" id="COG0048">
    <property type="taxonomic scope" value="Bacteria"/>
</dbReference>
<dbReference type="HOGENOM" id="CLU_104295_1_2_4"/>
<dbReference type="Proteomes" id="UP000000645">
    <property type="component" value="Chromosome"/>
</dbReference>
<dbReference type="GO" id="GO:0015935">
    <property type="term" value="C:small ribosomal subunit"/>
    <property type="evidence" value="ECO:0007669"/>
    <property type="project" value="InterPro"/>
</dbReference>
<dbReference type="GO" id="GO:0019843">
    <property type="term" value="F:rRNA binding"/>
    <property type="evidence" value="ECO:0007669"/>
    <property type="project" value="UniProtKB-UniRule"/>
</dbReference>
<dbReference type="GO" id="GO:0003735">
    <property type="term" value="F:structural constituent of ribosome"/>
    <property type="evidence" value="ECO:0007669"/>
    <property type="project" value="InterPro"/>
</dbReference>
<dbReference type="GO" id="GO:0000049">
    <property type="term" value="F:tRNA binding"/>
    <property type="evidence" value="ECO:0007669"/>
    <property type="project" value="UniProtKB-UniRule"/>
</dbReference>
<dbReference type="GO" id="GO:0006412">
    <property type="term" value="P:translation"/>
    <property type="evidence" value="ECO:0007669"/>
    <property type="project" value="UniProtKB-UniRule"/>
</dbReference>
<dbReference type="CDD" id="cd03368">
    <property type="entry name" value="Ribosomal_S12"/>
    <property type="match status" value="1"/>
</dbReference>
<dbReference type="FunFam" id="2.40.50.140:FF:000001">
    <property type="entry name" value="30S ribosomal protein S12"/>
    <property type="match status" value="1"/>
</dbReference>
<dbReference type="Gene3D" id="2.40.50.140">
    <property type="entry name" value="Nucleic acid-binding proteins"/>
    <property type="match status" value="1"/>
</dbReference>
<dbReference type="HAMAP" id="MF_00403_B">
    <property type="entry name" value="Ribosomal_uS12_B"/>
    <property type="match status" value="1"/>
</dbReference>
<dbReference type="InterPro" id="IPR012340">
    <property type="entry name" value="NA-bd_OB-fold"/>
</dbReference>
<dbReference type="InterPro" id="IPR006032">
    <property type="entry name" value="Ribosomal_uS12"/>
</dbReference>
<dbReference type="InterPro" id="IPR005679">
    <property type="entry name" value="Ribosomal_uS12_bac"/>
</dbReference>
<dbReference type="NCBIfam" id="TIGR00981">
    <property type="entry name" value="rpsL_bact"/>
    <property type="match status" value="1"/>
</dbReference>
<dbReference type="PANTHER" id="PTHR11652">
    <property type="entry name" value="30S RIBOSOMAL PROTEIN S12 FAMILY MEMBER"/>
    <property type="match status" value="1"/>
</dbReference>
<dbReference type="Pfam" id="PF00164">
    <property type="entry name" value="Ribosom_S12_S23"/>
    <property type="match status" value="1"/>
</dbReference>
<dbReference type="PIRSF" id="PIRSF002133">
    <property type="entry name" value="Ribosomal_S12/S23"/>
    <property type="match status" value="1"/>
</dbReference>
<dbReference type="PRINTS" id="PR01034">
    <property type="entry name" value="RIBOSOMALS12"/>
</dbReference>
<dbReference type="SUPFAM" id="SSF50249">
    <property type="entry name" value="Nucleic acid-binding proteins"/>
    <property type="match status" value="1"/>
</dbReference>
<dbReference type="PROSITE" id="PS00055">
    <property type="entry name" value="RIBOSOMAL_S12"/>
    <property type="match status" value="1"/>
</dbReference>